<evidence type="ECO:0000255" key="1">
    <source>
        <dbReference type="HAMAP-Rule" id="MF_00375"/>
    </source>
</evidence>
<sequence>MSNSHTLFEAAQAHIPGGVNSPVRAFKGVGGDPVFFESAKGAYLTDADGKQYIDYVASWGPAILGHTHPDVIKAVQTQAEKGLSFGAPTEIETTMADMVCDLIPSMDMVRMVSSGTEATMTAIRLARGYTGRDKIVKFEGCYHGHSDSLLVKAGSGALTLGVPSSPGVPACLAQETLTLTHNDSEEVKKVFSEIGDQIACIIVEPVAGNMNCIPPEDGFLETLREVCDESGAVLIFDEVMCGFRVGLTGAQGRYNITPDLTTFGKVIGGGMPVGAFGGKKEVMQHIAPLGPVYQAGTLSGNPIAMTAGLKTLELISKPGFFEELEAKTTKLVNGLQKAADEAGIAFTTNQVGAMFGFFFSEEKDIRRFSQVAKGNMEQFKAFYHGMLDEGIYLAPSAFEAGFVSSAHTDQDIDDTIAAAKKVMATL</sequence>
<comment type="catalytic activity">
    <reaction evidence="1">
        <text>(S)-4-amino-5-oxopentanoate = 5-aminolevulinate</text>
        <dbReference type="Rhea" id="RHEA:14265"/>
        <dbReference type="ChEBI" id="CHEBI:57501"/>
        <dbReference type="ChEBI" id="CHEBI:356416"/>
        <dbReference type="EC" id="5.4.3.8"/>
    </reaction>
</comment>
<comment type="cofactor">
    <cofactor evidence="1">
        <name>pyridoxal 5'-phosphate</name>
        <dbReference type="ChEBI" id="CHEBI:597326"/>
    </cofactor>
</comment>
<comment type="pathway">
    <text evidence="1">Porphyrin-containing compound metabolism; protoporphyrin-IX biosynthesis; 5-aminolevulinate from L-glutamyl-tRNA(Glu): step 2/2.</text>
</comment>
<comment type="subunit">
    <text evidence="1">Homodimer.</text>
</comment>
<comment type="subcellular location">
    <subcellularLocation>
        <location evidence="1">Cytoplasm</location>
    </subcellularLocation>
</comment>
<comment type="similarity">
    <text evidence="1">Belongs to the class-III pyridoxal-phosphate-dependent aminotransferase family. HemL subfamily.</text>
</comment>
<dbReference type="EC" id="5.4.3.8" evidence="1"/>
<dbReference type="EMBL" id="CP000109">
    <property type="protein sequence ID" value="ABB42162.1"/>
    <property type="molecule type" value="Genomic_DNA"/>
</dbReference>
<dbReference type="SMR" id="Q31FB1"/>
<dbReference type="STRING" id="317025.Tcr_1570"/>
<dbReference type="KEGG" id="tcx:Tcr_1570"/>
<dbReference type="eggNOG" id="COG0001">
    <property type="taxonomic scope" value="Bacteria"/>
</dbReference>
<dbReference type="HOGENOM" id="CLU_016922_1_5_6"/>
<dbReference type="OrthoDB" id="9801052at2"/>
<dbReference type="UniPathway" id="UPA00251">
    <property type="reaction ID" value="UER00317"/>
</dbReference>
<dbReference type="GO" id="GO:0005737">
    <property type="term" value="C:cytoplasm"/>
    <property type="evidence" value="ECO:0007669"/>
    <property type="project" value="UniProtKB-SubCell"/>
</dbReference>
<dbReference type="GO" id="GO:0042286">
    <property type="term" value="F:glutamate-1-semialdehyde 2,1-aminomutase activity"/>
    <property type="evidence" value="ECO:0007669"/>
    <property type="project" value="UniProtKB-UniRule"/>
</dbReference>
<dbReference type="GO" id="GO:0030170">
    <property type="term" value="F:pyridoxal phosphate binding"/>
    <property type="evidence" value="ECO:0007669"/>
    <property type="project" value="InterPro"/>
</dbReference>
<dbReference type="GO" id="GO:0008483">
    <property type="term" value="F:transaminase activity"/>
    <property type="evidence" value="ECO:0007669"/>
    <property type="project" value="InterPro"/>
</dbReference>
<dbReference type="GO" id="GO:0006782">
    <property type="term" value="P:protoporphyrinogen IX biosynthetic process"/>
    <property type="evidence" value="ECO:0007669"/>
    <property type="project" value="UniProtKB-UniRule"/>
</dbReference>
<dbReference type="CDD" id="cd00610">
    <property type="entry name" value="OAT_like"/>
    <property type="match status" value="1"/>
</dbReference>
<dbReference type="FunFam" id="3.40.640.10:FF:000021">
    <property type="entry name" value="Glutamate-1-semialdehyde 2,1-aminomutase"/>
    <property type="match status" value="1"/>
</dbReference>
<dbReference type="Gene3D" id="3.90.1150.10">
    <property type="entry name" value="Aspartate Aminotransferase, domain 1"/>
    <property type="match status" value="1"/>
</dbReference>
<dbReference type="Gene3D" id="3.40.640.10">
    <property type="entry name" value="Type I PLP-dependent aspartate aminotransferase-like (Major domain)"/>
    <property type="match status" value="1"/>
</dbReference>
<dbReference type="HAMAP" id="MF_00375">
    <property type="entry name" value="HemL_aminotrans_3"/>
    <property type="match status" value="1"/>
</dbReference>
<dbReference type="InterPro" id="IPR004639">
    <property type="entry name" value="4pyrrol_synth_GluAld_NH2Trfase"/>
</dbReference>
<dbReference type="InterPro" id="IPR005814">
    <property type="entry name" value="Aminotrans_3"/>
</dbReference>
<dbReference type="InterPro" id="IPR049704">
    <property type="entry name" value="Aminotrans_3_PPA_site"/>
</dbReference>
<dbReference type="InterPro" id="IPR015424">
    <property type="entry name" value="PyrdxlP-dep_Trfase"/>
</dbReference>
<dbReference type="InterPro" id="IPR015421">
    <property type="entry name" value="PyrdxlP-dep_Trfase_major"/>
</dbReference>
<dbReference type="InterPro" id="IPR015422">
    <property type="entry name" value="PyrdxlP-dep_Trfase_small"/>
</dbReference>
<dbReference type="NCBIfam" id="TIGR00713">
    <property type="entry name" value="hemL"/>
    <property type="match status" value="1"/>
</dbReference>
<dbReference type="NCBIfam" id="NF000818">
    <property type="entry name" value="PRK00062.1"/>
    <property type="match status" value="1"/>
</dbReference>
<dbReference type="PANTHER" id="PTHR43713">
    <property type="entry name" value="GLUTAMATE-1-SEMIALDEHYDE 2,1-AMINOMUTASE"/>
    <property type="match status" value="1"/>
</dbReference>
<dbReference type="PANTHER" id="PTHR43713:SF3">
    <property type="entry name" value="GLUTAMATE-1-SEMIALDEHYDE 2,1-AMINOMUTASE 1, CHLOROPLASTIC-RELATED"/>
    <property type="match status" value="1"/>
</dbReference>
<dbReference type="Pfam" id="PF00202">
    <property type="entry name" value="Aminotran_3"/>
    <property type="match status" value="1"/>
</dbReference>
<dbReference type="SUPFAM" id="SSF53383">
    <property type="entry name" value="PLP-dependent transferases"/>
    <property type="match status" value="1"/>
</dbReference>
<dbReference type="PROSITE" id="PS00600">
    <property type="entry name" value="AA_TRANSFER_CLASS_3"/>
    <property type="match status" value="1"/>
</dbReference>
<feature type="chain" id="PRO_0000243638" description="Glutamate-1-semialdehyde 2,1-aminomutase">
    <location>
        <begin position="1"/>
        <end position="426"/>
    </location>
</feature>
<feature type="modified residue" description="N6-(pyridoxal phosphate)lysine" evidence="1">
    <location>
        <position position="265"/>
    </location>
</feature>
<reference key="1">
    <citation type="journal article" date="2006" name="PLoS Biol.">
        <title>The genome of deep-sea vent chemolithoautotroph Thiomicrospira crunogena XCL-2.</title>
        <authorList>
            <person name="Scott K.M."/>
            <person name="Sievert S.M."/>
            <person name="Abril F.N."/>
            <person name="Ball L.A."/>
            <person name="Barrett C.J."/>
            <person name="Blake R.A."/>
            <person name="Boller A.J."/>
            <person name="Chain P.S.G."/>
            <person name="Clark J.A."/>
            <person name="Davis C.R."/>
            <person name="Detter C."/>
            <person name="Do K.F."/>
            <person name="Dobrinski K.P."/>
            <person name="Faza B.I."/>
            <person name="Fitzpatrick K.A."/>
            <person name="Freyermuth S.K."/>
            <person name="Harmer T.L."/>
            <person name="Hauser L.J."/>
            <person name="Huegler M."/>
            <person name="Kerfeld C.A."/>
            <person name="Klotz M.G."/>
            <person name="Kong W.W."/>
            <person name="Land M."/>
            <person name="Lapidus A."/>
            <person name="Larimer F.W."/>
            <person name="Longo D.L."/>
            <person name="Lucas S."/>
            <person name="Malfatti S.A."/>
            <person name="Massey S.E."/>
            <person name="Martin D.D."/>
            <person name="McCuddin Z."/>
            <person name="Meyer F."/>
            <person name="Moore J.L."/>
            <person name="Ocampo L.H. Jr."/>
            <person name="Paul J.H."/>
            <person name="Paulsen I.T."/>
            <person name="Reep D.K."/>
            <person name="Ren Q."/>
            <person name="Ross R.L."/>
            <person name="Sato P.Y."/>
            <person name="Thomas P."/>
            <person name="Tinkham L.E."/>
            <person name="Zeruth G.T."/>
        </authorList>
    </citation>
    <scope>NUCLEOTIDE SEQUENCE [LARGE SCALE GENOMIC DNA]</scope>
    <source>
        <strain>DSM 25203 / XCL-2</strain>
    </source>
</reference>
<organism>
    <name type="scientific">Hydrogenovibrio crunogenus (strain DSM 25203 / XCL-2)</name>
    <name type="common">Thiomicrospira crunogena</name>
    <dbReference type="NCBI Taxonomy" id="317025"/>
    <lineage>
        <taxon>Bacteria</taxon>
        <taxon>Pseudomonadati</taxon>
        <taxon>Pseudomonadota</taxon>
        <taxon>Gammaproteobacteria</taxon>
        <taxon>Thiotrichales</taxon>
        <taxon>Piscirickettsiaceae</taxon>
        <taxon>Hydrogenovibrio</taxon>
    </lineage>
</organism>
<name>GSA_HYDCU</name>
<gene>
    <name evidence="1" type="primary">hemL</name>
    <name type="ordered locus">Tcr_1570</name>
</gene>
<keyword id="KW-0963">Cytoplasm</keyword>
<keyword id="KW-0413">Isomerase</keyword>
<keyword id="KW-0627">Porphyrin biosynthesis</keyword>
<keyword id="KW-0663">Pyridoxal phosphate</keyword>
<accession>Q31FB1</accession>
<protein>
    <recommendedName>
        <fullName evidence="1">Glutamate-1-semialdehyde 2,1-aminomutase</fullName>
        <shortName evidence="1">GSA</shortName>
        <ecNumber evidence="1">5.4.3.8</ecNumber>
    </recommendedName>
    <alternativeName>
        <fullName evidence="1">Glutamate-1-semialdehyde aminotransferase</fullName>
        <shortName evidence="1">GSA-AT</shortName>
    </alternativeName>
</protein>
<proteinExistence type="inferred from homology"/>